<sequence>MTKTVFVLNGPNLNLLGKREPGIYGVATLDDIEASCKREAGQLELQIDFRQSNHEGDLVSWIQEAGEKNAYVLINPAAYSHTSVAIHDAIRSARVTVVEVHLSNIHAREAFRHHSHVSAVAKGVICGFGAEGYLLGLRALAAIAKEEENNGQSIKGA</sequence>
<keyword id="KW-0028">Amino-acid biosynthesis</keyword>
<keyword id="KW-0057">Aromatic amino acid biosynthesis</keyword>
<keyword id="KW-0456">Lyase</keyword>
<proteinExistence type="inferred from homology"/>
<feature type="chain" id="PRO_1000077030" description="3-dehydroquinate dehydratase">
    <location>
        <begin position="1"/>
        <end position="157"/>
    </location>
</feature>
<feature type="active site" description="Proton acceptor" evidence="1">
    <location>
        <position position="24"/>
    </location>
</feature>
<feature type="active site" description="Proton donor" evidence="1">
    <location>
        <position position="101"/>
    </location>
</feature>
<feature type="binding site" evidence="1">
    <location>
        <position position="75"/>
    </location>
    <ligand>
        <name>substrate</name>
    </ligand>
</feature>
<feature type="binding site" evidence="1">
    <location>
        <position position="81"/>
    </location>
    <ligand>
        <name>substrate</name>
    </ligand>
</feature>
<feature type="binding site" evidence="1">
    <location>
        <position position="88"/>
    </location>
    <ligand>
        <name>substrate</name>
    </ligand>
</feature>
<feature type="binding site" evidence="1">
    <location>
        <begin position="102"/>
        <end position="103"/>
    </location>
    <ligand>
        <name>substrate</name>
    </ligand>
</feature>
<feature type="binding site" evidence="1">
    <location>
        <position position="112"/>
    </location>
    <ligand>
        <name>substrate</name>
    </ligand>
</feature>
<feature type="site" description="Transition state stabilizer" evidence="1">
    <location>
        <position position="19"/>
    </location>
</feature>
<protein>
    <recommendedName>
        <fullName evidence="1">3-dehydroquinate dehydratase</fullName>
        <shortName evidence="1">3-dehydroquinase</shortName>
        <ecNumber evidence="1">4.2.1.10</ecNumber>
    </recommendedName>
    <alternativeName>
        <fullName evidence="1">Type II DHQase</fullName>
    </alternativeName>
</protein>
<evidence type="ECO:0000255" key="1">
    <source>
        <dbReference type="HAMAP-Rule" id="MF_00169"/>
    </source>
</evidence>
<comment type="function">
    <text evidence="1">Catalyzes a trans-dehydration via an enolate intermediate.</text>
</comment>
<comment type="catalytic activity">
    <reaction evidence="1">
        <text>3-dehydroquinate = 3-dehydroshikimate + H2O</text>
        <dbReference type="Rhea" id="RHEA:21096"/>
        <dbReference type="ChEBI" id="CHEBI:15377"/>
        <dbReference type="ChEBI" id="CHEBI:16630"/>
        <dbReference type="ChEBI" id="CHEBI:32364"/>
        <dbReference type="EC" id="4.2.1.10"/>
    </reaction>
</comment>
<comment type="pathway">
    <text evidence="1">Metabolic intermediate biosynthesis; chorismate biosynthesis; chorismate from D-erythrose 4-phosphate and phosphoenolpyruvate: step 3/7.</text>
</comment>
<comment type="subunit">
    <text evidence="1">Homododecamer.</text>
</comment>
<comment type="similarity">
    <text evidence="1">Belongs to the type-II 3-dehydroquinase family.</text>
</comment>
<organism>
    <name type="scientific">Brucella suis (strain ATCC 23445 / NCTC 10510)</name>
    <dbReference type="NCBI Taxonomy" id="470137"/>
    <lineage>
        <taxon>Bacteria</taxon>
        <taxon>Pseudomonadati</taxon>
        <taxon>Pseudomonadota</taxon>
        <taxon>Alphaproteobacteria</taxon>
        <taxon>Hyphomicrobiales</taxon>
        <taxon>Brucellaceae</taxon>
        <taxon>Brucella/Ochrobactrum group</taxon>
        <taxon>Brucella</taxon>
    </lineage>
</organism>
<dbReference type="EC" id="4.2.1.10" evidence="1"/>
<dbReference type="EMBL" id="CP000911">
    <property type="protein sequence ID" value="ABY38012.1"/>
    <property type="molecule type" value="Genomic_DNA"/>
</dbReference>
<dbReference type="RefSeq" id="WP_002964037.1">
    <property type="nucleotide sequence ID" value="NC_010169.1"/>
</dbReference>
<dbReference type="SMR" id="B0CLN2"/>
<dbReference type="GeneID" id="97533798"/>
<dbReference type="KEGG" id="bmt:BSUIS_A0947"/>
<dbReference type="HOGENOM" id="CLU_090968_1_0_5"/>
<dbReference type="UniPathway" id="UPA00053">
    <property type="reaction ID" value="UER00086"/>
</dbReference>
<dbReference type="Proteomes" id="UP000008545">
    <property type="component" value="Chromosome I"/>
</dbReference>
<dbReference type="GO" id="GO:0003855">
    <property type="term" value="F:3-dehydroquinate dehydratase activity"/>
    <property type="evidence" value="ECO:0007669"/>
    <property type="project" value="UniProtKB-UniRule"/>
</dbReference>
<dbReference type="GO" id="GO:0008652">
    <property type="term" value="P:amino acid biosynthetic process"/>
    <property type="evidence" value="ECO:0007669"/>
    <property type="project" value="UniProtKB-KW"/>
</dbReference>
<dbReference type="GO" id="GO:0009073">
    <property type="term" value="P:aromatic amino acid family biosynthetic process"/>
    <property type="evidence" value="ECO:0007669"/>
    <property type="project" value="UniProtKB-KW"/>
</dbReference>
<dbReference type="GO" id="GO:0009423">
    <property type="term" value="P:chorismate biosynthetic process"/>
    <property type="evidence" value="ECO:0007669"/>
    <property type="project" value="UniProtKB-UniRule"/>
</dbReference>
<dbReference type="GO" id="GO:0019631">
    <property type="term" value="P:quinate catabolic process"/>
    <property type="evidence" value="ECO:0007669"/>
    <property type="project" value="TreeGrafter"/>
</dbReference>
<dbReference type="CDD" id="cd00466">
    <property type="entry name" value="DHQase_II"/>
    <property type="match status" value="1"/>
</dbReference>
<dbReference type="Gene3D" id="3.40.50.9100">
    <property type="entry name" value="Dehydroquinase, class II"/>
    <property type="match status" value="1"/>
</dbReference>
<dbReference type="HAMAP" id="MF_00169">
    <property type="entry name" value="AroQ"/>
    <property type="match status" value="1"/>
</dbReference>
<dbReference type="InterPro" id="IPR001874">
    <property type="entry name" value="DHquinase_II"/>
</dbReference>
<dbReference type="InterPro" id="IPR018509">
    <property type="entry name" value="DHquinase_II_CS"/>
</dbReference>
<dbReference type="InterPro" id="IPR036441">
    <property type="entry name" value="DHquinase_II_sf"/>
</dbReference>
<dbReference type="NCBIfam" id="TIGR01088">
    <property type="entry name" value="aroQ"/>
    <property type="match status" value="1"/>
</dbReference>
<dbReference type="NCBIfam" id="NF003805">
    <property type="entry name" value="PRK05395.1-2"/>
    <property type="match status" value="1"/>
</dbReference>
<dbReference type="NCBIfam" id="NF003806">
    <property type="entry name" value="PRK05395.1-3"/>
    <property type="match status" value="1"/>
</dbReference>
<dbReference type="NCBIfam" id="NF003807">
    <property type="entry name" value="PRK05395.1-4"/>
    <property type="match status" value="1"/>
</dbReference>
<dbReference type="PANTHER" id="PTHR21272">
    <property type="entry name" value="CATABOLIC 3-DEHYDROQUINASE"/>
    <property type="match status" value="1"/>
</dbReference>
<dbReference type="PANTHER" id="PTHR21272:SF3">
    <property type="entry name" value="CATABOLIC 3-DEHYDROQUINASE"/>
    <property type="match status" value="1"/>
</dbReference>
<dbReference type="Pfam" id="PF01220">
    <property type="entry name" value="DHquinase_II"/>
    <property type="match status" value="1"/>
</dbReference>
<dbReference type="PIRSF" id="PIRSF001399">
    <property type="entry name" value="DHquinase_II"/>
    <property type="match status" value="1"/>
</dbReference>
<dbReference type="SUPFAM" id="SSF52304">
    <property type="entry name" value="Type II 3-dehydroquinate dehydratase"/>
    <property type="match status" value="1"/>
</dbReference>
<dbReference type="PROSITE" id="PS01029">
    <property type="entry name" value="DEHYDROQUINASE_II"/>
    <property type="match status" value="1"/>
</dbReference>
<name>AROQ_BRUSI</name>
<accession>B0CLN2</accession>
<gene>
    <name evidence="1" type="primary">aroQ</name>
    <name type="ordered locus">BSUIS_A0947</name>
</gene>
<reference key="1">
    <citation type="submission" date="2007-12" db="EMBL/GenBank/DDBJ databases">
        <title>Brucella suis ATCC 23445 whole genome shotgun sequencing project.</title>
        <authorList>
            <person name="Setubal J.C."/>
            <person name="Bowns C."/>
            <person name="Boyle S."/>
            <person name="Crasta O.R."/>
            <person name="Czar M.J."/>
            <person name="Dharmanolla C."/>
            <person name="Gillespie J.J."/>
            <person name="Kenyon R.W."/>
            <person name="Lu J."/>
            <person name="Mane S."/>
            <person name="Mohapatra S."/>
            <person name="Nagrani S."/>
            <person name="Purkayastha A."/>
            <person name="Rajasimha H.K."/>
            <person name="Shallom J.M."/>
            <person name="Shallom S."/>
            <person name="Shukla M."/>
            <person name="Snyder E.E."/>
            <person name="Sobral B.W."/>
            <person name="Wattam A.R."/>
            <person name="Will R."/>
            <person name="Williams K."/>
            <person name="Yoo H."/>
            <person name="Bruce D."/>
            <person name="Detter C."/>
            <person name="Munk C."/>
            <person name="Brettin T.S."/>
        </authorList>
    </citation>
    <scope>NUCLEOTIDE SEQUENCE [LARGE SCALE GENOMIC DNA]</scope>
    <source>
        <strain>ATCC 23445 / NCTC 10510</strain>
    </source>
</reference>